<comment type="similarity">
    <text evidence="1">Belongs to the bacterial ribosomal protein bS16 family.</text>
</comment>
<name>RS16_ANAPZ</name>
<gene>
    <name evidence="1" type="primary">rpsP</name>
    <name type="ordered locus">APH_0054</name>
</gene>
<protein>
    <recommendedName>
        <fullName evidence="1">Small ribosomal subunit protein bS16</fullName>
    </recommendedName>
    <alternativeName>
        <fullName evidence="2">30S ribosomal protein S16</fullName>
    </alternativeName>
</protein>
<proteinExistence type="inferred from homology"/>
<organism>
    <name type="scientific">Anaplasma phagocytophilum (strain HZ)</name>
    <dbReference type="NCBI Taxonomy" id="212042"/>
    <lineage>
        <taxon>Bacteria</taxon>
        <taxon>Pseudomonadati</taxon>
        <taxon>Pseudomonadota</taxon>
        <taxon>Alphaproteobacteria</taxon>
        <taxon>Rickettsiales</taxon>
        <taxon>Anaplasmataceae</taxon>
        <taxon>Anaplasma</taxon>
        <taxon>phagocytophilum group</taxon>
    </lineage>
</organism>
<evidence type="ECO:0000255" key="1">
    <source>
        <dbReference type="HAMAP-Rule" id="MF_00385"/>
    </source>
</evidence>
<evidence type="ECO:0000305" key="2"/>
<feature type="chain" id="PRO_0000243769" description="Small ribosomal subunit protein bS16">
    <location>
        <begin position="1"/>
        <end position="96"/>
    </location>
</feature>
<dbReference type="EMBL" id="CP000235">
    <property type="protein sequence ID" value="ABD43391.1"/>
    <property type="molecule type" value="Genomic_DNA"/>
</dbReference>
<dbReference type="RefSeq" id="WP_011450213.1">
    <property type="nucleotide sequence ID" value="NC_007797.1"/>
</dbReference>
<dbReference type="SMR" id="Q2GLR4"/>
<dbReference type="STRING" id="212042.APH_0054"/>
<dbReference type="PaxDb" id="212042-APH_0054"/>
<dbReference type="EnsemblBacteria" id="ABD43391">
    <property type="protein sequence ID" value="ABD43391"/>
    <property type="gene ID" value="APH_0054"/>
</dbReference>
<dbReference type="GeneID" id="92747691"/>
<dbReference type="KEGG" id="aph:APH_0054"/>
<dbReference type="eggNOG" id="COG0228">
    <property type="taxonomic scope" value="Bacteria"/>
</dbReference>
<dbReference type="HOGENOM" id="CLU_100590_5_0_5"/>
<dbReference type="Proteomes" id="UP000001943">
    <property type="component" value="Chromosome"/>
</dbReference>
<dbReference type="GO" id="GO:0005737">
    <property type="term" value="C:cytoplasm"/>
    <property type="evidence" value="ECO:0007669"/>
    <property type="project" value="UniProtKB-ARBA"/>
</dbReference>
<dbReference type="GO" id="GO:0015935">
    <property type="term" value="C:small ribosomal subunit"/>
    <property type="evidence" value="ECO:0007669"/>
    <property type="project" value="TreeGrafter"/>
</dbReference>
<dbReference type="GO" id="GO:0003735">
    <property type="term" value="F:structural constituent of ribosome"/>
    <property type="evidence" value="ECO:0007669"/>
    <property type="project" value="InterPro"/>
</dbReference>
<dbReference type="GO" id="GO:0006412">
    <property type="term" value="P:translation"/>
    <property type="evidence" value="ECO:0007669"/>
    <property type="project" value="UniProtKB-UniRule"/>
</dbReference>
<dbReference type="Gene3D" id="3.30.1320.10">
    <property type="match status" value="1"/>
</dbReference>
<dbReference type="HAMAP" id="MF_00385">
    <property type="entry name" value="Ribosomal_bS16"/>
    <property type="match status" value="1"/>
</dbReference>
<dbReference type="InterPro" id="IPR000307">
    <property type="entry name" value="Ribosomal_bS16"/>
</dbReference>
<dbReference type="InterPro" id="IPR023803">
    <property type="entry name" value="Ribosomal_bS16_dom_sf"/>
</dbReference>
<dbReference type="NCBIfam" id="TIGR00002">
    <property type="entry name" value="S16"/>
    <property type="match status" value="1"/>
</dbReference>
<dbReference type="PANTHER" id="PTHR12919">
    <property type="entry name" value="30S RIBOSOMAL PROTEIN S16"/>
    <property type="match status" value="1"/>
</dbReference>
<dbReference type="PANTHER" id="PTHR12919:SF20">
    <property type="entry name" value="SMALL RIBOSOMAL SUBUNIT PROTEIN BS16M"/>
    <property type="match status" value="1"/>
</dbReference>
<dbReference type="Pfam" id="PF00886">
    <property type="entry name" value="Ribosomal_S16"/>
    <property type="match status" value="1"/>
</dbReference>
<dbReference type="SUPFAM" id="SSF54565">
    <property type="entry name" value="Ribosomal protein S16"/>
    <property type="match status" value="1"/>
</dbReference>
<reference key="1">
    <citation type="journal article" date="2006" name="PLoS Genet.">
        <title>Comparative genomics of emerging human ehrlichiosis agents.</title>
        <authorList>
            <person name="Dunning Hotopp J.C."/>
            <person name="Lin M."/>
            <person name="Madupu R."/>
            <person name="Crabtree J."/>
            <person name="Angiuoli S.V."/>
            <person name="Eisen J.A."/>
            <person name="Seshadri R."/>
            <person name="Ren Q."/>
            <person name="Wu M."/>
            <person name="Utterback T.R."/>
            <person name="Smith S."/>
            <person name="Lewis M."/>
            <person name="Khouri H."/>
            <person name="Zhang C."/>
            <person name="Niu H."/>
            <person name="Lin Q."/>
            <person name="Ohashi N."/>
            <person name="Zhi N."/>
            <person name="Nelson W.C."/>
            <person name="Brinkac L.M."/>
            <person name="Dodson R.J."/>
            <person name="Rosovitz M.J."/>
            <person name="Sundaram J.P."/>
            <person name="Daugherty S.C."/>
            <person name="Davidsen T."/>
            <person name="Durkin A.S."/>
            <person name="Gwinn M.L."/>
            <person name="Haft D.H."/>
            <person name="Selengut J.D."/>
            <person name="Sullivan S.A."/>
            <person name="Zafar N."/>
            <person name="Zhou L."/>
            <person name="Benahmed F."/>
            <person name="Forberger H."/>
            <person name="Halpin R."/>
            <person name="Mulligan S."/>
            <person name="Robinson J."/>
            <person name="White O."/>
            <person name="Rikihisa Y."/>
            <person name="Tettelin H."/>
        </authorList>
    </citation>
    <scope>NUCLEOTIDE SEQUENCE [LARGE SCALE GENOMIC DNA]</scope>
    <source>
        <strain>HZ</strain>
    </source>
</reference>
<sequence>MSVKIRLMRLGAKKKPFYRIVVADSRVQRDGKCIEQIGFYNPMVECGAPGFLKVNAERLGYWLGVGAQPTDRVSWFIKKGFIEAQSGSAASTAQEA</sequence>
<keyword id="KW-0687">Ribonucleoprotein</keyword>
<keyword id="KW-0689">Ribosomal protein</keyword>
<accession>Q2GLR4</accession>